<protein>
    <recommendedName>
        <fullName>Nucleoprotein</fullName>
    </recommendedName>
    <alternativeName>
        <fullName>Nucleocapsid protein</fullName>
    </alternativeName>
</protein>
<gene>
    <name type="primary">NP</name>
</gene>
<organism>
    <name type="scientific">Lake Victoria marburgvirus (strain Ravn-87)</name>
    <name type="common">MARV</name>
    <name type="synonym">Marburg virus (strain Kenya/Ravn/1987)</name>
    <dbReference type="NCBI Taxonomy" id="378809"/>
    <lineage>
        <taxon>Viruses</taxon>
        <taxon>Riboviria</taxon>
        <taxon>Orthornavirae</taxon>
        <taxon>Negarnaviricota</taxon>
        <taxon>Haploviricotina</taxon>
        <taxon>Monjiviricetes</taxon>
        <taxon>Mononegavirales</taxon>
        <taxon>Filoviridae</taxon>
        <taxon>Orthomarburgvirus</taxon>
        <taxon>Orthomarburgvirus marburgense</taxon>
    </lineage>
</organism>
<proteinExistence type="inferred from homology"/>
<accession>Q1PDD0</accession>
<reference key="1">
    <citation type="journal article" date="2006" name="J. Virol.">
        <title>Marburgvirus genomics and association with a large hemorrhagic fever outbreak in Angola.</title>
        <authorList>
            <person name="Towner J.S."/>
            <person name="Khristova M.L."/>
            <person name="Sealy T.K."/>
            <person name="Vincent M.J."/>
            <person name="Erickson B.R."/>
            <person name="Bawiec D.A."/>
            <person name="Hartman A.L."/>
            <person name="Comer J.A."/>
            <person name="Zaki S.R."/>
            <person name="Stroeher U."/>
            <person name="Gomes da Silva F."/>
            <person name="del Castillo F."/>
            <person name="Rollin P.E."/>
            <person name="Ksiazek T.G."/>
            <person name="Nichol S.T."/>
        </authorList>
    </citation>
    <scope>NUCLEOTIDE SEQUENCE [GENOMIC RNA]</scope>
</reference>
<evidence type="ECO:0000250" key="1"/>
<evidence type="ECO:0000255" key="2"/>
<evidence type="ECO:0000256" key="3">
    <source>
        <dbReference type="SAM" id="MobiDB-lite"/>
    </source>
</evidence>
<evidence type="ECO:0000305" key="4"/>
<feature type="chain" id="PRO_0000314975" description="Nucleoprotein">
    <location>
        <begin position="1"/>
        <end position="695"/>
    </location>
</feature>
<feature type="region of interest" description="Disordered" evidence="3">
    <location>
        <begin position="426"/>
        <end position="458"/>
    </location>
</feature>
<feature type="region of interest" description="Disordered" evidence="3">
    <location>
        <begin position="472"/>
        <end position="611"/>
    </location>
</feature>
<feature type="coiled-coil region" evidence="2">
    <location>
        <begin position="316"/>
        <end position="341"/>
    </location>
</feature>
<feature type="coiled-coil region" evidence="2">
    <location>
        <begin position="372"/>
        <end position="400"/>
    </location>
</feature>
<feature type="short sequence motif" description="PTAP/PSAP motif" evidence="1">
    <location>
        <begin position="603"/>
        <end position="606"/>
    </location>
</feature>
<feature type="compositionally biased region" description="Polar residues" evidence="3">
    <location>
        <begin position="474"/>
        <end position="484"/>
    </location>
</feature>
<feature type="compositionally biased region" description="Basic and acidic residues" evidence="3">
    <location>
        <begin position="502"/>
        <end position="516"/>
    </location>
</feature>
<feature type="compositionally biased region" description="Acidic residues" evidence="3">
    <location>
        <begin position="529"/>
        <end position="547"/>
    </location>
</feature>
<comment type="function">
    <text evidence="1">Encapsidates the genome, protecting it from nucleases. The encapsidated genomic RNA is termed the nucleocapsid and serves as template for transcription and replication. During replication, encapsidation by NP is coupled to RNA synthesis and all replicative products are resistant to nucleases (By similarity).</text>
</comment>
<comment type="subunit">
    <text evidence="1">Homooligomer. Homomultimerizes to form the nucleocapsid. Binds to viral genomic RNA. Interacts with VP35 and VP30 to form the nucleocapsid. Also interacts with VP24 and VP40 (By similarity).</text>
</comment>
<comment type="subcellular location">
    <subcellularLocation>
        <location>Virion</location>
    </subcellularLocation>
    <subcellularLocation>
        <location evidence="1">Host cytoplasm</location>
    </subcellularLocation>
</comment>
<comment type="domain">
    <text evidence="1">This protein can be divided into a hydrophobic N-terminal half, and a hydrophilic and highly acidic C-terminal half.</text>
</comment>
<comment type="domain">
    <text evidence="1">The coiled coil region is critical for homooligomerization, for the interaction with VP35 and for NP function in RNA synthesis.</text>
</comment>
<comment type="domain">
    <text evidence="1">Late-budding domains (L domains) are short sequence motifs essential for viral particle budding. They recruit proteins of the host ESCRT machinery (Endosomal Sorting Complex Required for Transport) or ESCRT-associated proteins. Nucleoprotein contains one L domain: a PTAP/PSAP motif, which interacts with the UEV domain of TSG101 (By similarity).</text>
</comment>
<comment type="PTM">
    <text evidence="1">Phosphorylated.</text>
</comment>
<comment type="similarity">
    <text evidence="4">Belongs to the filoviruses nucleoprotein family.</text>
</comment>
<organismHost>
    <name type="scientific">Chlorocebus aethiops</name>
    <name type="common">Green monkey</name>
    <name type="synonym">Cercopithecus aethiops</name>
    <dbReference type="NCBI Taxonomy" id="9534"/>
</organismHost>
<organismHost>
    <name type="scientific">Homo sapiens</name>
    <name type="common">Human</name>
    <dbReference type="NCBI Taxonomy" id="9606"/>
</organismHost>
<organismHost>
    <name type="scientific">Rousettus aegyptiacus</name>
    <name type="common">Egyptian fruit bat</name>
    <name type="synonym">Pteropus aegyptiacus</name>
    <dbReference type="NCBI Taxonomy" id="9407"/>
</organismHost>
<dbReference type="EMBL" id="DQ447649">
    <property type="protein sequence ID" value="ABE27068.1"/>
    <property type="molecule type" value="Genomic_RNA"/>
</dbReference>
<dbReference type="SMR" id="Q1PDD0"/>
<dbReference type="IntAct" id="Q1PDD0">
    <property type="interactions" value="1"/>
</dbReference>
<dbReference type="Proteomes" id="UP000008239">
    <property type="component" value="Genome"/>
</dbReference>
<dbReference type="GO" id="GO:0019029">
    <property type="term" value="C:helical viral capsid"/>
    <property type="evidence" value="ECO:0007669"/>
    <property type="project" value="UniProtKB-KW"/>
</dbReference>
<dbReference type="GO" id="GO:0030430">
    <property type="term" value="C:host cell cytoplasm"/>
    <property type="evidence" value="ECO:0007669"/>
    <property type="project" value="UniProtKB-SubCell"/>
</dbReference>
<dbReference type="GO" id="GO:1990904">
    <property type="term" value="C:ribonucleoprotein complex"/>
    <property type="evidence" value="ECO:0007669"/>
    <property type="project" value="UniProtKB-KW"/>
</dbReference>
<dbReference type="GO" id="GO:0019013">
    <property type="term" value="C:viral nucleocapsid"/>
    <property type="evidence" value="ECO:0007669"/>
    <property type="project" value="UniProtKB-KW"/>
</dbReference>
<dbReference type="GO" id="GO:0003723">
    <property type="term" value="F:RNA binding"/>
    <property type="evidence" value="ECO:0007669"/>
    <property type="project" value="UniProtKB-KW"/>
</dbReference>
<dbReference type="GO" id="GO:0039702">
    <property type="term" value="P:viral budding via host ESCRT complex"/>
    <property type="evidence" value="ECO:0007669"/>
    <property type="project" value="UniProtKB-KW"/>
</dbReference>
<dbReference type="GO" id="GO:0019074">
    <property type="term" value="P:viral RNA genome packaging"/>
    <property type="evidence" value="ECO:0007669"/>
    <property type="project" value="InterPro"/>
</dbReference>
<dbReference type="InterPro" id="IPR008609">
    <property type="entry name" value="Ebola_NP"/>
</dbReference>
<dbReference type="Pfam" id="PF05505">
    <property type="entry name" value="Ebola_NP"/>
    <property type="match status" value="1"/>
</dbReference>
<dbReference type="PIRSF" id="PIRSF003900">
    <property type="entry name" value="N_FiloV"/>
    <property type="match status" value="1"/>
</dbReference>
<keyword id="KW-0167">Capsid protein</keyword>
<keyword id="KW-0175">Coiled coil</keyword>
<keyword id="KW-1139">Helical capsid protein</keyword>
<keyword id="KW-1035">Host cytoplasm</keyword>
<keyword id="KW-0945">Host-virus interaction</keyword>
<keyword id="KW-0597">Phosphoprotein</keyword>
<keyword id="KW-0687">Ribonucleoprotein</keyword>
<keyword id="KW-0694">RNA-binding</keyword>
<keyword id="KW-1198">Viral budding</keyword>
<keyword id="KW-1187">Viral budding via the host ESCRT complexes</keyword>
<keyword id="KW-0543">Viral nucleoprotein</keyword>
<keyword id="KW-1188">Viral release from host cell</keyword>
<keyword id="KW-0946">Virion</keyword>
<sequence>MDLHSLLELGTKPTAPHVRNKKVILFDTNHQVSICNQIIDAINSGIDLGDLLEGGLLTLCVEHYYNSDKDKFNTSPIAKYLRDAGYEFDVIKNPDATRFLEVIPNEPHYSPLILALKTLESTESQRGRIGLFLSFCSLFLPKLVVGDRASIEKALRQVTVHQEQGIVTYPNHWLTTGHMKVIFGILRSSFILKFVLIHQGVNLVTGHDAYDSIISNSVGQTRFSGLLIVKTVLEFILQKTDSGVALHPLVRTSKVKNEVASFKQALSNLARHGEYAPFARVLNLSGINNLEHGLYPQLSAIALGVATAHGSTLAGVNVGEQYQQLREAAHDAEVKLQRRHEHQEIQAIAEDDEERKILEQFHLQKTEITHSQTLAVLSQKREKLARLAAEIENNIAEDQGFKQSQNQVSQSFLNDPTPVEVTVQARSINRPTALPPPVDNKIEHETEEDSSSSSSFVDLNDPFALLNEDEDTLENSVMAPSTTLREPKEVSEPLRQTQDLDISQKKQGNESTDPARKQFLRYQELPPVQEDDESEYTTDSQESDDQPGSDNEQGVDLPPPPLYAQEKRQDPIQHPAVSSQDPFGSIGDVDGDILEPIRSPSSPSAPQEDTRMGEAYELSPDFTSYEDNQQNWPQRVVTKKGRTFLYPNDLLQTSPPESLITALVEEYQNPVSAKELQADWPDMSFDERRHVAMNL</sequence>
<name>NCAP_MABVR</name>